<gene>
    <name evidence="1" type="primary">ndhD</name>
</gene>
<geneLocation type="chloroplast"/>
<feature type="chain" id="PRO_0000275911" description="NAD(P)H-quinone oxidoreductase chain 4, chloroplastic">
    <location>
        <begin position="1"/>
        <end position="500"/>
    </location>
</feature>
<feature type="transmembrane region" description="Helical" evidence="1">
    <location>
        <begin position="4"/>
        <end position="24"/>
    </location>
</feature>
<feature type="transmembrane region" description="Helical" evidence="1">
    <location>
        <begin position="35"/>
        <end position="55"/>
    </location>
</feature>
<feature type="transmembrane region" description="Helical" evidence="1">
    <location>
        <begin position="87"/>
        <end position="107"/>
    </location>
</feature>
<feature type="transmembrane region" description="Helical" evidence="1">
    <location>
        <begin position="113"/>
        <end position="130"/>
    </location>
</feature>
<feature type="transmembrane region" description="Helical" evidence="1">
    <location>
        <begin position="134"/>
        <end position="154"/>
    </location>
</feature>
<feature type="transmembrane region" description="Helical" evidence="1">
    <location>
        <begin position="167"/>
        <end position="187"/>
    </location>
</feature>
<feature type="transmembrane region" description="Helical" evidence="1">
    <location>
        <begin position="207"/>
        <end position="227"/>
    </location>
</feature>
<feature type="transmembrane region" description="Helical" evidence="1">
    <location>
        <begin position="242"/>
        <end position="262"/>
    </location>
</feature>
<feature type="transmembrane region" description="Helical" evidence="1">
    <location>
        <begin position="272"/>
        <end position="292"/>
    </location>
</feature>
<feature type="transmembrane region" description="Helical" evidence="1">
    <location>
        <begin position="305"/>
        <end position="325"/>
    </location>
</feature>
<feature type="transmembrane region" description="Helical" evidence="1">
    <location>
        <begin position="330"/>
        <end position="350"/>
    </location>
</feature>
<feature type="transmembrane region" description="Helical" evidence="1">
    <location>
        <begin position="386"/>
        <end position="406"/>
    </location>
</feature>
<feature type="transmembrane region" description="Helical" evidence="1">
    <location>
        <begin position="416"/>
        <end position="436"/>
    </location>
</feature>
<feature type="transmembrane region" description="Helical" evidence="1">
    <location>
        <begin position="462"/>
        <end position="482"/>
    </location>
</feature>
<keyword id="KW-0150">Chloroplast</keyword>
<keyword id="KW-0472">Membrane</keyword>
<keyword id="KW-0520">NAD</keyword>
<keyword id="KW-0521">NADP</keyword>
<keyword id="KW-0934">Plastid</keyword>
<keyword id="KW-0618">Plastoquinone</keyword>
<keyword id="KW-0874">Quinone</keyword>
<keyword id="KW-0793">Thylakoid</keyword>
<keyword id="KW-1278">Translocase</keyword>
<keyword id="KW-0812">Transmembrane</keyword>
<keyword id="KW-1133">Transmembrane helix</keyword>
<comment type="catalytic activity">
    <reaction evidence="1">
        <text>a plastoquinone + NADH + (n+1) H(+)(in) = a plastoquinol + NAD(+) + n H(+)(out)</text>
        <dbReference type="Rhea" id="RHEA:42608"/>
        <dbReference type="Rhea" id="RHEA-COMP:9561"/>
        <dbReference type="Rhea" id="RHEA-COMP:9562"/>
        <dbReference type="ChEBI" id="CHEBI:15378"/>
        <dbReference type="ChEBI" id="CHEBI:17757"/>
        <dbReference type="ChEBI" id="CHEBI:57540"/>
        <dbReference type="ChEBI" id="CHEBI:57945"/>
        <dbReference type="ChEBI" id="CHEBI:62192"/>
    </reaction>
</comment>
<comment type="catalytic activity">
    <reaction evidence="1">
        <text>a plastoquinone + NADPH + (n+1) H(+)(in) = a plastoquinol + NADP(+) + n H(+)(out)</text>
        <dbReference type="Rhea" id="RHEA:42612"/>
        <dbReference type="Rhea" id="RHEA-COMP:9561"/>
        <dbReference type="Rhea" id="RHEA-COMP:9562"/>
        <dbReference type="ChEBI" id="CHEBI:15378"/>
        <dbReference type="ChEBI" id="CHEBI:17757"/>
        <dbReference type="ChEBI" id="CHEBI:57783"/>
        <dbReference type="ChEBI" id="CHEBI:58349"/>
        <dbReference type="ChEBI" id="CHEBI:62192"/>
    </reaction>
</comment>
<comment type="subcellular location">
    <subcellularLocation>
        <location evidence="1">Plastid</location>
        <location evidence="1">Chloroplast thylakoid membrane</location>
        <topology evidence="1">Multi-pass membrane protein</topology>
    </subcellularLocation>
</comment>
<comment type="similarity">
    <text evidence="1">Belongs to the complex I subunit 4 family.</text>
</comment>
<sequence>MNKFPWLTIIVVLPIFAGSLIFFLPHKGNRVIRWYTICICMLELLLTTYAFCYHFQLDDPLIQLVEDYKWINFFDFRWKLGIDGLSLGPVLLTGFITTLATLAAWPVTRDSRLFHFLMLAMYSGQIGSFSSRDLLLFFIMWELELIPVYLLLSMWGGKKRLYSATKFILYTAGGSIFLLMGVLGVGLYGSNEPTLNFETSVNQSYPVALEIIFYIGFLIAFAVKLPILPLHTWLPDTHGEAHYSTCMLLAGILLKMGAYGLIRINMELLPHAHSIFSPWLMVVGTIQIIYAASTSLGQRNLKKRIAYSSVSHMGFILIGIASITDTGLNGAILQIISHGFIGAALFFLAGTSYDRIRLVYLDEMGGVAIPMPKIFTMFSSFSMASLALPGMSGFVAEVLVFLGIITSQKYLLMPKIAITFVMAIGMILTPIYLLSMSRQIFYGYKLFNTPNSYVFDSGPRELFVSISIFIPVIGIGMYPDFVLSLSVDKVEGILSNYFYR</sequence>
<dbReference type="EC" id="7.1.1.-" evidence="1"/>
<dbReference type="EMBL" id="DQ383815">
    <property type="protein sequence ID" value="ABD47201.1"/>
    <property type="molecule type" value="Genomic_DNA"/>
</dbReference>
<dbReference type="RefSeq" id="YP_588173.1">
    <property type="nucleotide sequence ID" value="NC_007977.1"/>
</dbReference>
<dbReference type="SMR" id="Q1KXQ3"/>
<dbReference type="GeneID" id="4055627"/>
<dbReference type="KEGG" id="han:4055627"/>
<dbReference type="OrthoDB" id="564260at2759"/>
<dbReference type="GO" id="GO:0009535">
    <property type="term" value="C:chloroplast thylakoid membrane"/>
    <property type="evidence" value="ECO:0007669"/>
    <property type="project" value="UniProtKB-SubCell"/>
</dbReference>
<dbReference type="GO" id="GO:0008137">
    <property type="term" value="F:NADH dehydrogenase (ubiquinone) activity"/>
    <property type="evidence" value="ECO:0007669"/>
    <property type="project" value="InterPro"/>
</dbReference>
<dbReference type="GO" id="GO:0048038">
    <property type="term" value="F:quinone binding"/>
    <property type="evidence" value="ECO:0007669"/>
    <property type="project" value="UniProtKB-KW"/>
</dbReference>
<dbReference type="GO" id="GO:0042773">
    <property type="term" value="P:ATP synthesis coupled electron transport"/>
    <property type="evidence" value="ECO:0007669"/>
    <property type="project" value="InterPro"/>
</dbReference>
<dbReference type="HAMAP" id="MF_00491">
    <property type="entry name" value="NDH1_NuoM"/>
    <property type="match status" value="1"/>
</dbReference>
<dbReference type="InterPro" id="IPR022997">
    <property type="entry name" value="NADH_Q_OxRdtase_chain4"/>
</dbReference>
<dbReference type="InterPro" id="IPR010227">
    <property type="entry name" value="NADH_Q_OxRdtase_chainM/4"/>
</dbReference>
<dbReference type="InterPro" id="IPR003918">
    <property type="entry name" value="NADH_UbQ_OxRdtase"/>
</dbReference>
<dbReference type="InterPro" id="IPR001750">
    <property type="entry name" value="ND/Mrp_TM"/>
</dbReference>
<dbReference type="NCBIfam" id="TIGR01972">
    <property type="entry name" value="NDH_I_M"/>
    <property type="match status" value="1"/>
</dbReference>
<dbReference type="PANTHER" id="PTHR43507:SF21">
    <property type="entry name" value="NAD(P)H-QUINONE OXIDOREDUCTASE CHAIN 4, CHLOROPLASTIC"/>
    <property type="match status" value="1"/>
</dbReference>
<dbReference type="PANTHER" id="PTHR43507">
    <property type="entry name" value="NADH-UBIQUINONE OXIDOREDUCTASE CHAIN 4"/>
    <property type="match status" value="1"/>
</dbReference>
<dbReference type="Pfam" id="PF00361">
    <property type="entry name" value="Proton_antipo_M"/>
    <property type="match status" value="1"/>
</dbReference>
<dbReference type="PRINTS" id="PR01437">
    <property type="entry name" value="NUOXDRDTASE4"/>
</dbReference>
<protein>
    <recommendedName>
        <fullName evidence="1">NAD(P)H-quinone oxidoreductase chain 4, chloroplastic</fullName>
        <ecNumber evidence="1">7.1.1.-</ecNumber>
    </recommendedName>
    <alternativeName>
        <fullName evidence="1">NAD(P)H dehydrogenase, chain 4</fullName>
    </alternativeName>
    <alternativeName>
        <fullName evidence="1">NADH-plastoquinone oxidoreductase chain 4</fullName>
    </alternativeName>
</protein>
<evidence type="ECO:0000255" key="1">
    <source>
        <dbReference type="HAMAP-Rule" id="MF_00491"/>
    </source>
</evidence>
<organism>
    <name type="scientific">Helianthus annuus</name>
    <name type="common">Common sunflower</name>
    <dbReference type="NCBI Taxonomy" id="4232"/>
    <lineage>
        <taxon>Eukaryota</taxon>
        <taxon>Viridiplantae</taxon>
        <taxon>Streptophyta</taxon>
        <taxon>Embryophyta</taxon>
        <taxon>Tracheophyta</taxon>
        <taxon>Spermatophyta</taxon>
        <taxon>Magnoliopsida</taxon>
        <taxon>eudicotyledons</taxon>
        <taxon>Gunneridae</taxon>
        <taxon>Pentapetalae</taxon>
        <taxon>asterids</taxon>
        <taxon>campanulids</taxon>
        <taxon>Asterales</taxon>
        <taxon>Asteraceae</taxon>
        <taxon>Asteroideae</taxon>
        <taxon>Heliantheae alliance</taxon>
        <taxon>Heliantheae</taxon>
        <taxon>Helianthus</taxon>
    </lineage>
</organism>
<accession>Q1KXQ3</accession>
<proteinExistence type="inferred from homology"/>
<name>NU4C_HELAN</name>
<reference key="1">
    <citation type="submission" date="2006-01" db="EMBL/GenBank/DDBJ databases">
        <title>A comparison of the first two published chloroplast genomes in Asteraceae: Lactuca and Helianthus.</title>
        <authorList>
            <person name="Timme R.E."/>
            <person name="Kuehl J.V."/>
            <person name="Boore J.L."/>
            <person name="Jansen R.K."/>
        </authorList>
    </citation>
    <scope>NUCLEOTIDE SEQUENCE [LARGE SCALE GENOMIC DNA]</scope>
    <source>
        <strain>cv. HA383</strain>
    </source>
</reference>